<comment type="function">
    <text evidence="4 5 6 7 8">Multifunctional diterpene synthase; part of the 2 gene clusters that mediate the biosynthesis of fusicoccins, diterpene glucosides that display phytohormone-like activity and function as potent activators of plasma membrane H(+)-ATPases in plants by modifying 14-3-3 proteins and cause the plant disease constriction canker (PubMed:17360612, PubMed:26734760). The first step in the pathway is performed by the fusicoccadiene synthase PaFS that possesses both prenyl transferase and terpene cyclase activity, converting isopentenyl diphosphate and dimethylallyl diphosphate into geranylgeranyl diphosphate (GGDP) and successively converting GGDP into fusicocca-2,10(14)-diene, a precursor for fusicoccin H (PubMed:17360612, PubMed:26734760). Fusicoccadiene synthase is an allosteric enzyme for GGPP cyclization that generates 64% fusicoccadiene, 9% delta-araneosene, and one additional unidentified diterpene product, when incubated with GGPP (PubMed:26734760). In the absence of isopentenyl diphosphate (IPP), PaFS can also solvolyze the shorter chain geranyl diphosphate (GPP) and farnesyl diphosphate (FPP) as alternative substrates to yield predominantly acyclic products. FPP is converted to farnesol (60.5%), nerolidol (14.0%), and farnesene (14.0%), while GPP is converted to a mixture of geraniol (59.5%) and linalool (35.0%) (PubMed:26734760). The second step is the oxidation at the C-8 position by the cytochrome P450 monooxygenase PaP450-2 to yield fusicocca-2,10(14)-diene-8-beta-ol (PubMed:22870285). The cytochrome P450 monooxygenase PaP450-1 then catalyzes the hydroxylation at the C-16 position to produce fusicocca-2,10(14)-diene-8-beta,16-diol (PubMed:22870285). The dioxygenase fc-dox then catalyzes the 16-oxydation of fusicocca-2,10(14)-diene-8-beta,16-diol to yield an aldehyde (8-beta-hydroxyfusicocca-1,10(14)-dien-16-al) (PubMed:21299202, PubMed:22870285). The short-chain dehydrogenase/reductase fc-sdr catalyzes the reduction of the aldehyde to yield fusicocca-1,10(14)-diene-8-beta,16-diol (PubMed:21299202, PubMed:22870285). The next step is the hydroxylation at C-9 performed by the cytochrome P450 monooxygenase PaP450-3 that leads to fusicoccin H aglycon which is glycosylated to fusicoccin H by the O-glycosyltransferase PAGT (PubMed:22870285). Hydroxylation at C-12 by the cytochrome P450 monooxygenase PaP450-4 leads then to the production of fusicoccin Q and is followed by methylation by the O-methyltransferase PAMT to yield fusicoccin P (PubMed:22870285). Fusicoccin P is further converted to fusicoccin J via prenylation by the O-glucose prenyltransferase PaPT (PubMed:22287087). Cytochrome P450 monooxygenase PaP450-5 then performs hydroxylation at C-19 to yield dideacetyl-fusicoccin A which is acetylated to 3'-O-deacetyl-fusicoccin A by the O-acetyltransferase PaAT-2 (PubMed:22870285). Finally, a another acetylation by the O-acetyltransferase PaAT-1 yields fusicoccin A (PubMed:22870285).</text>
</comment>
<comment type="catalytic activity">
    <reaction evidence="4 8">
        <text>geranylgeranyl diphosphate = fusicocca-2,10(14)-diene + diphosphate</text>
        <dbReference type="Rhea" id="RHEA:26245"/>
        <dbReference type="ChEBI" id="CHEBI:33019"/>
        <dbReference type="ChEBI" id="CHEBI:52463"/>
        <dbReference type="ChEBI" id="CHEBI:57533"/>
        <dbReference type="EC" id="4.2.3.43"/>
    </reaction>
</comment>
<comment type="catalytic activity">
    <reaction evidence="4 8">
        <text>isopentenyl diphosphate + (2E,6E)-farnesyl diphosphate = (2E,6E,10E)-geranylgeranyl diphosphate + diphosphate</text>
        <dbReference type="Rhea" id="RHEA:17653"/>
        <dbReference type="ChEBI" id="CHEBI:33019"/>
        <dbReference type="ChEBI" id="CHEBI:58756"/>
        <dbReference type="ChEBI" id="CHEBI:128769"/>
        <dbReference type="ChEBI" id="CHEBI:175763"/>
        <dbReference type="EC" id="2.5.1.29"/>
    </reaction>
</comment>
<comment type="biophysicochemical properties">
    <kinetics>
        <KM evidence="8">9.2 uM for GPP</KM>
        <KM evidence="8">0.14 uM for FPP</KM>
        <KM evidence="8">0.632 uM for GGPP</KM>
    </kinetics>
</comment>
<comment type="pathway">
    <text evidence="4 8">Mycotoxin biosynthesis.</text>
</comment>
<comment type="subunit">
    <text evidence="8">Hexamer.</text>
</comment>
<comment type="similarity">
    <text evidence="12">In the N-terminal section; belongs to the terpene synthase family.</text>
</comment>
<comment type="similarity">
    <text evidence="12">In the C-terminal section; belongs to the FPP/GGPP synthase family.</text>
</comment>
<keyword id="KW-0002">3D-structure</keyword>
<keyword id="KW-0414">Isoprene biosynthesis</keyword>
<keyword id="KW-0456">Lyase</keyword>
<keyword id="KW-0460">Magnesium</keyword>
<keyword id="KW-0479">Metal-binding</keyword>
<keyword id="KW-0511">Multifunctional enzyme</keyword>
<keyword id="KW-0808">Transferase</keyword>
<accession>A2PZA5</accession>
<dbReference type="EC" id="4.2.3.43" evidence="4 8"/>
<dbReference type="EC" id="2.5.1.29" evidence="4 8"/>
<dbReference type="EMBL" id="AB267396">
    <property type="protein sequence ID" value="BAF45924.1"/>
    <property type="molecule type" value="mRNA"/>
</dbReference>
<dbReference type="EMBL" id="AB272062">
    <property type="protein sequence ID" value="BAF45925.1"/>
    <property type="molecule type" value="Genomic_DNA"/>
</dbReference>
<dbReference type="PDB" id="5ER8">
    <property type="method" value="X-ray"/>
    <property type="resolution" value="2.50 A"/>
    <property type="chains" value="A/B=1-344"/>
</dbReference>
<dbReference type="PDB" id="5ERM">
    <property type="method" value="X-ray"/>
    <property type="resolution" value="2.30 A"/>
    <property type="chains" value="A/B=1-344"/>
</dbReference>
<dbReference type="PDB" id="5ERN">
    <property type="method" value="X-ray"/>
    <property type="resolution" value="2.43 A"/>
    <property type="chains" value="A/B=389-719"/>
</dbReference>
<dbReference type="PDB" id="5ERO">
    <property type="method" value="X-ray"/>
    <property type="resolution" value="2.55 A"/>
    <property type="chains" value="A/B/C=389-719"/>
</dbReference>
<dbReference type="PDB" id="7JTH">
    <property type="method" value="EM"/>
    <property type="resolution" value="4.00 A"/>
    <property type="chains" value="A/B/C/D/E/F/G/H=1-719"/>
</dbReference>
<dbReference type="PDB" id="8EAX">
    <property type="method" value="EM"/>
    <property type="resolution" value="3.73 A"/>
    <property type="chains" value="A/B/C/D/E/F/G/H=1-719"/>
</dbReference>
<dbReference type="PDB" id="9B3T">
    <property type="method" value="EM"/>
    <property type="resolution" value="3.53 A"/>
    <property type="chains" value="A/B/C/D/E/F/G/H=1-719"/>
</dbReference>
<dbReference type="PDBsum" id="5ER8"/>
<dbReference type="PDBsum" id="5ERM"/>
<dbReference type="PDBsum" id="5ERN"/>
<dbReference type="PDBsum" id="5ERO"/>
<dbReference type="PDBsum" id="7JTH"/>
<dbReference type="PDBsum" id="8EAX"/>
<dbReference type="PDBsum" id="9B3T"/>
<dbReference type="EMDB" id="EMD-22473"/>
<dbReference type="EMDB" id="EMD-23602"/>
<dbReference type="EMDB" id="EMD-27989"/>
<dbReference type="EMDB" id="EMD-44098"/>
<dbReference type="EMDB" id="EMD-44155"/>
<dbReference type="SMR" id="A2PZA5"/>
<dbReference type="KEGG" id="ag:BAF45924"/>
<dbReference type="BioCyc" id="MetaCyc:MONOMER-14878"/>
<dbReference type="BRENDA" id="4.2.3.43">
    <property type="organism ID" value="10693"/>
</dbReference>
<dbReference type="SABIO-RK" id="A2PZA5"/>
<dbReference type="EvolutionaryTrace" id="A2PZA5"/>
<dbReference type="GO" id="GO:0004311">
    <property type="term" value="F:geranylgeranyl diphosphate synthase activity"/>
    <property type="evidence" value="ECO:0007669"/>
    <property type="project" value="UniProtKB-EC"/>
</dbReference>
<dbReference type="GO" id="GO:0016829">
    <property type="term" value="F:lyase activity"/>
    <property type="evidence" value="ECO:0007669"/>
    <property type="project" value="UniProtKB-KW"/>
</dbReference>
<dbReference type="GO" id="GO:0046872">
    <property type="term" value="F:metal ion binding"/>
    <property type="evidence" value="ECO:0007669"/>
    <property type="project" value="UniProtKB-KW"/>
</dbReference>
<dbReference type="GO" id="GO:0046165">
    <property type="term" value="P:alcohol biosynthetic process"/>
    <property type="evidence" value="ECO:0007669"/>
    <property type="project" value="UniProtKB-ARBA"/>
</dbReference>
<dbReference type="GO" id="GO:0008299">
    <property type="term" value="P:isoprenoid biosynthetic process"/>
    <property type="evidence" value="ECO:0007669"/>
    <property type="project" value="UniProtKB-KW"/>
</dbReference>
<dbReference type="GO" id="GO:0043386">
    <property type="term" value="P:mycotoxin biosynthetic process"/>
    <property type="evidence" value="ECO:0007669"/>
    <property type="project" value="UniProtKB-ARBA"/>
</dbReference>
<dbReference type="Gene3D" id="1.10.600.10">
    <property type="entry name" value="Farnesyl Diphosphate Synthase"/>
    <property type="match status" value="2"/>
</dbReference>
<dbReference type="InterPro" id="IPR008949">
    <property type="entry name" value="Isoprenoid_synthase_dom_sf"/>
</dbReference>
<dbReference type="InterPro" id="IPR000092">
    <property type="entry name" value="Polyprenyl_synt"/>
</dbReference>
<dbReference type="InterPro" id="IPR033749">
    <property type="entry name" value="Polyprenyl_synt_CS"/>
</dbReference>
<dbReference type="PANTHER" id="PTHR12001">
    <property type="entry name" value="GERANYLGERANYL PYROPHOSPHATE SYNTHASE"/>
    <property type="match status" value="1"/>
</dbReference>
<dbReference type="PANTHER" id="PTHR12001:SF72">
    <property type="entry name" value="THIJ_PFPI FAMILY PROTEIN (AFU_ORTHOLOGUE AFUA_3G01210)-RELATED"/>
    <property type="match status" value="1"/>
</dbReference>
<dbReference type="Pfam" id="PF00348">
    <property type="entry name" value="polyprenyl_synt"/>
    <property type="match status" value="1"/>
</dbReference>
<dbReference type="Pfam" id="PF19086">
    <property type="entry name" value="Terpene_syn_C_2"/>
    <property type="match status" value="1"/>
</dbReference>
<dbReference type="SUPFAM" id="SSF48576">
    <property type="entry name" value="Terpenoid synthases"/>
    <property type="match status" value="2"/>
</dbReference>
<dbReference type="PROSITE" id="PS00723">
    <property type="entry name" value="POLYPRENYL_SYNTHASE_1"/>
    <property type="match status" value="1"/>
</dbReference>
<dbReference type="PROSITE" id="PS00444">
    <property type="entry name" value="POLYPRENYL_SYNTHASE_2"/>
    <property type="match status" value="1"/>
</dbReference>
<name>FC1_PHOAM</name>
<sequence length="719" mass="81614">MEFKYSEVVEPSTYYTEGLCEGIDVRKSKFTTLEDRGAIRAHEDWNKHIGPCGEYRGTLGPRFSFISVAVPECIPERLEVISYANEFAFLHDDVTDHVGHDTGEVENDEMMTVFLEAAHTGAIDTSNKVDIRRAGKKRIQSQLFLEMLAIDPECAKTTMKSWARFVEVGSSRQHETRFVELAKYIPYRIMDVGEMFWFGLVTFGLGLHIPDHELELCRELMANAWIAVGLQNDIWSWPKERDAATLHGKDHVVNAIWVLMQEHQTDVDGAMQICRKLIVEYVAKYLEVIEATKNDESISLDLRKYLDAMLYSISGNVVWSLECPRYNPDVSFNKTQLEWMRQGLPSLESCPVLARSPEIDSDESAVSPTADESDSTEDSLGSGSRQDSSLSTGLSLSPVHSNEGKDLQRVDTDHIFFEKAVLEAPYDYIASMPSKGVRDQFIDALNDWLRVPDVKVGKIKDAVRVLHNSSLLLDDFQDNSPLRRGKPSTHNIFGSAQTVNTATYSIIKAIGQIMEFSAGESVQEVMNSIMILFQGQAMDLFWTYNGHVPSEEEYYRMIDQKTGQLFSIATSLLLNAADNEIPRTKIQSCLHRLTRLLGRCFQIRDDYQNLVSADYTKQKGFCEDLDEGKWSLALIHMIHKQRSHMALLNVLSTGRKHGGMTLEQKQFVLDIIEEEKSLDYTRSVMMDLHVQLRAEIGRIEILLDSPNPAMRLLLELLRV</sequence>
<organism>
    <name type="scientific">Phomopsis amygdali</name>
    <name type="common">Fusicoccum amygdali</name>
    <dbReference type="NCBI Taxonomy" id="1214568"/>
    <lineage>
        <taxon>Eukaryota</taxon>
        <taxon>Fungi</taxon>
        <taxon>Dikarya</taxon>
        <taxon>Ascomycota</taxon>
        <taxon>Pezizomycotina</taxon>
        <taxon>Sordariomycetes</taxon>
        <taxon>Sordariomycetidae</taxon>
        <taxon>Diaporthales</taxon>
        <taxon>Diaporthaceae</taxon>
        <taxon>Diaporthe</taxon>
    </lineage>
</organism>
<protein>
    <recommendedName>
        <fullName evidence="9">Fusicoccadiene synthase</fullName>
        <shortName evidence="9">FS</shortName>
    </recommendedName>
    <alternativeName>
        <fullName evidence="11">Fusicoccin A biosynthetic gene clusters protein 1</fullName>
    </alternativeName>
    <alternativeName>
        <fullName evidence="9">PaDC4:GGS</fullName>
    </alternativeName>
    <domain>
        <recommendedName>
            <fullName evidence="9">Fusicocca-2,10(14)-diene synthase</fullName>
            <ecNumber evidence="4 8">4.2.3.43</ecNumber>
        </recommendedName>
        <alternativeName>
            <fullName evidence="9">Diterpene cyclase 4</fullName>
            <shortName evidence="9">DC 4</shortName>
        </alternativeName>
    </domain>
    <domain>
        <recommendedName>
            <fullName evidence="9">Geranylgeranyl diphosphate synthase</fullName>
            <shortName evidence="9">GGDP synthase</shortName>
            <shortName evidence="9">GGS</shortName>
            <ecNumber evidence="4 8">2.5.1.29</ecNumber>
        </recommendedName>
    </domain>
</protein>
<evidence type="ECO:0000250" key="1">
    <source>
        <dbReference type="UniProtKB" id="Q12051"/>
    </source>
</evidence>
<evidence type="ECO:0000250" key="2">
    <source>
        <dbReference type="UniProtKB" id="Q40577"/>
    </source>
</evidence>
<evidence type="ECO:0000256" key="3">
    <source>
        <dbReference type="SAM" id="MobiDB-lite"/>
    </source>
</evidence>
<evidence type="ECO:0000269" key="4">
    <source>
    </source>
</evidence>
<evidence type="ECO:0000269" key="5">
    <source>
    </source>
</evidence>
<evidence type="ECO:0000269" key="6">
    <source>
    </source>
</evidence>
<evidence type="ECO:0000269" key="7">
    <source>
    </source>
</evidence>
<evidence type="ECO:0000269" key="8">
    <source>
    </source>
</evidence>
<evidence type="ECO:0000303" key="9">
    <source>
    </source>
</evidence>
<evidence type="ECO:0000303" key="10">
    <source>
    </source>
</evidence>
<evidence type="ECO:0000303" key="11">
    <source>
    </source>
</evidence>
<evidence type="ECO:0000305" key="12"/>
<evidence type="ECO:0000305" key="13">
    <source>
    </source>
</evidence>
<evidence type="ECO:0007744" key="14">
    <source>
        <dbReference type="PDB" id="5ER8"/>
    </source>
</evidence>
<evidence type="ECO:0007744" key="15">
    <source>
        <dbReference type="PDB" id="5ERM"/>
    </source>
</evidence>
<evidence type="ECO:0007744" key="16">
    <source>
        <dbReference type="PDB" id="5ERN"/>
    </source>
</evidence>
<evidence type="ECO:0007744" key="17">
    <source>
        <dbReference type="PDB" id="5ERO"/>
    </source>
</evidence>
<evidence type="ECO:0007829" key="18">
    <source>
        <dbReference type="PDB" id="5ER8"/>
    </source>
</evidence>
<evidence type="ECO:0007829" key="19">
    <source>
        <dbReference type="PDB" id="5ERM"/>
    </source>
</evidence>
<evidence type="ECO:0007829" key="20">
    <source>
        <dbReference type="PDB" id="5ERN"/>
    </source>
</evidence>
<evidence type="ECO:0007829" key="21">
    <source>
        <dbReference type="PDB" id="5ERO"/>
    </source>
</evidence>
<reference key="1">
    <citation type="journal article" date="2007" name="Proc. Natl. Acad. Sci. U.S.A.">
        <title>Fusicoccins are biosynthesized by an unusual chimera diterpene synthase in fungi.</title>
        <authorList>
            <person name="Toyomasu T."/>
            <person name="Tsukahara M."/>
            <person name="Kaneko A."/>
            <person name="Niida R."/>
            <person name="Mitsuhashi W."/>
            <person name="Dairi T."/>
            <person name="Kato N."/>
            <person name="Sassa T."/>
        </authorList>
    </citation>
    <scope>NUCLEOTIDE SEQUENCE [GENOMIC DNA / MRNA]</scope>
    <scope>FUNCTION</scope>
    <scope>CATALYTIC ACTIVITY</scope>
    <scope>MUTAGENESIS OF ASP-92 AND ASP-474</scope>
    <scope>PATHWAY</scope>
    <source>
        <strain>N2</strain>
    </source>
</reference>
<reference key="2">
    <citation type="journal article" date="2011" name="J. Am. Chem. Soc.">
        <title>Dioxygenases, key enzymes to determine the aglycon structures of fusicoccin and brassicicene, diterpene compounds produced by fungi.</title>
        <authorList>
            <person name="Ono Y."/>
            <person name="Minami A."/>
            <person name="Noike M."/>
            <person name="Higuchi Y."/>
            <person name="Toyomasu T."/>
            <person name="Sassa T."/>
            <person name="Kato N."/>
            <person name="Dairi T."/>
        </authorList>
    </citation>
    <scope>FUNCTION</scope>
</reference>
<reference key="3">
    <citation type="journal article" date="2012" name="ChemBioChem">
        <title>An enzyme catalyzing O-prenylation of the glucose moiety of fusicoccin A, a diterpene glucoside produced by the fungus Phomopsis amygdali.</title>
        <authorList>
            <person name="Noike M."/>
            <person name="Liu C."/>
            <person name="Ono Y."/>
            <person name="Hamano Y."/>
            <person name="Toyomasu T."/>
            <person name="Sassa T."/>
            <person name="Kato N."/>
            <person name="Dairi T."/>
        </authorList>
    </citation>
    <scope>FUNCTION</scope>
</reference>
<reference key="4">
    <citation type="journal article" date="2012" name="PLoS ONE">
        <title>Molecular breeding of a fungus producing a precursor diterpene suitable for semi-synthesis by dissection of the biosynthetic machinery.</title>
        <authorList>
            <person name="Noike M."/>
            <person name="Ono Y."/>
            <person name="Araki Y."/>
            <person name="Tanio R."/>
            <person name="Higuchi Y."/>
            <person name="Nitta H."/>
            <person name="Hamano Y."/>
            <person name="Toyomasu T."/>
            <person name="Sassa T."/>
            <person name="Kato N."/>
            <person name="Dairi T."/>
        </authorList>
    </citation>
    <scope>FUNCTION</scope>
</reference>
<reference evidence="14 15 16 17" key="5">
    <citation type="journal article" date="2016" name="ACS Chem. Biol.">
        <title>Structure and function of fusicoccadiene synthase, a hexameric bifunctional diterpene synthase.</title>
        <authorList>
            <person name="Chen M."/>
            <person name="Chou W.K."/>
            <person name="Toyomasu T."/>
            <person name="Cane D.E."/>
            <person name="Christianson D.W."/>
        </authorList>
    </citation>
    <scope>X-RAY CRYSTALLOGRAPHY (2.30 ANGSTROMS) OF 1-344 AND 389-719 IN COMPLEXES WITH THE BISPHOSPHONATE SUBSTRATE ANALOGS PAMIDRONATE AND NERIDRONATE</scope>
    <scope>SUBUNIT</scope>
    <scope>MUTAGENESIS OF ASP-92 AND ASP-474</scope>
    <scope>FUNCTION</scope>
    <scope>CATALYTIC ACTIVITY</scope>
    <scope>BIOPHYSICOCHEMICAL PROPERTIES</scope>
    <scope>PATHWAY</scope>
</reference>
<proteinExistence type="evidence at protein level"/>
<gene>
    <name evidence="9" type="primary">PaFS</name>
    <name evidence="10" type="synonym">orf1</name>
</gene>
<feature type="chain" id="PRO_0000418511" description="Fusicoccadiene synthase">
    <location>
        <begin position="1"/>
        <end position="719"/>
    </location>
</feature>
<feature type="region of interest" description="Fusicocca-2,10(14)-diene synthase" evidence="13">
    <location>
        <begin position="1"/>
        <end position="334"/>
    </location>
</feature>
<feature type="region of interest" description="Geranylgeranyl diphosphate synthase" evidence="13">
    <location>
        <begin position="335"/>
        <end position="719"/>
    </location>
</feature>
<feature type="region of interest" description="Disordered" evidence="3">
    <location>
        <begin position="358"/>
        <end position="404"/>
    </location>
</feature>
<feature type="compositionally biased region" description="Polar residues" evidence="3">
    <location>
        <begin position="378"/>
        <end position="400"/>
    </location>
</feature>
<feature type="binding site" evidence="2">
    <location>
        <position position="92"/>
    </location>
    <ligand>
        <name>Mg(2+)</name>
        <dbReference type="ChEBI" id="CHEBI:18420"/>
        <label>1</label>
    </ligand>
</feature>
<feature type="binding site" evidence="2">
    <location>
        <position position="92"/>
    </location>
    <ligand>
        <name>Mg(2+)</name>
        <dbReference type="ChEBI" id="CHEBI:18420"/>
        <label>2</label>
    </ligand>
</feature>
<feature type="binding site" evidence="2">
    <location>
        <position position="96"/>
    </location>
    <ligand>
        <name>Mg(2+)</name>
        <dbReference type="ChEBI" id="CHEBI:18420"/>
        <label>1</label>
    </ligand>
</feature>
<feature type="binding site" evidence="2">
    <location>
        <position position="96"/>
    </location>
    <ligand>
        <name>Mg(2+)</name>
        <dbReference type="ChEBI" id="CHEBI:18420"/>
        <label>2</label>
    </ligand>
</feature>
<feature type="binding site" evidence="1">
    <location>
        <position position="435"/>
    </location>
    <ligand>
        <name>isopentenyl diphosphate</name>
        <dbReference type="ChEBI" id="CHEBI:128769"/>
    </ligand>
</feature>
<feature type="binding site" evidence="1">
    <location>
        <position position="438"/>
    </location>
    <ligand>
        <name>isopentenyl diphosphate</name>
        <dbReference type="ChEBI" id="CHEBI:128769"/>
    </ligand>
</feature>
<feature type="binding site" evidence="1">
    <location>
        <position position="467"/>
    </location>
    <ligand>
        <name>isopentenyl diphosphate</name>
        <dbReference type="ChEBI" id="CHEBI:128769"/>
    </ligand>
</feature>
<feature type="binding site" evidence="1">
    <location>
        <position position="474"/>
    </location>
    <ligand>
        <name>Mg(2+)</name>
        <dbReference type="ChEBI" id="CHEBI:18420"/>
        <label>3</label>
    </ligand>
</feature>
<feature type="binding site" evidence="1">
    <location>
        <position position="474"/>
    </location>
    <ligand>
        <name>Mg(2+)</name>
        <dbReference type="ChEBI" id="CHEBI:18420"/>
        <label>4</label>
    </ligand>
</feature>
<feature type="binding site" evidence="1">
    <location>
        <position position="478"/>
    </location>
    <ligand>
        <name>Mg(2+)</name>
        <dbReference type="ChEBI" id="CHEBI:18420"/>
        <label>3</label>
    </ligand>
</feature>
<feature type="binding site" evidence="1">
    <location>
        <position position="478"/>
    </location>
    <ligand>
        <name>Mg(2+)</name>
        <dbReference type="ChEBI" id="CHEBI:18420"/>
        <label>4</label>
    </ligand>
</feature>
<feature type="binding site" evidence="1">
    <location>
        <position position="483"/>
    </location>
    <ligand>
        <name>dimethylallyl diphosphate</name>
        <dbReference type="ChEBI" id="CHEBI:57623"/>
    </ligand>
</feature>
<feature type="binding site" evidence="1">
    <location>
        <position position="484"/>
    </location>
    <ligand>
        <name>isopentenyl diphosphate</name>
        <dbReference type="ChEBI" id="CHEBI:128769"/>
    </ligand>
</feature>
<feature type="binding site" evidence="1">
    <location>
        <position position="561"/>
    </location>
    <ligand>
        <name>dimethylallyl diphosphate</name>
        <dbReference type="ChEBI" id="CHEBI:57623"/>
    </ligand>
</feature>
<feature type="binding site" evidence="1">
    <location>
        <position position="562"/>
    </location>
    <ligand>
        <name>dimethylallyl diphosphate</name>
        <dbReference type="ChEBI" id="CHEBI:57623"/>
    </ligand>
</feature>
<feature type="binding site" evidence="1">
    <location>
        <position position="602"/>
    </location>
    <ligand>
        <name>dimethylallyl diphosphate</name>
        <dbReference type="ChEBI" id="CHEBI:57623"/>
    </ligand>
</feature>
<feature type="binding site" evidence="1">
    <location>
        <position position="609"/>
    </location>
    <ligand>
        <name>dimethylallyl diphosphate</name>
        <dbReference type="ChEBI" id="CHEBI:57623"/>
    </ligand>
</feature>
<feature type="binding site" evidence="1">
    <location>
        <position position="619"/>
    </location>
    <ligand>
        <name>dimethylallyl diphosphate</name>
        <dbReference type="ChEBI" id="CHEBI:57623"/>
    </ligand>
</feature>
<feature type="binding site" evidence="1">
    <location>
        <position position="629"/>
    </location>
    <ligand>
        <name>dimethylallyl diphosphate</name>
        <dbReference type="ChEBI" id="CHEBI:57623"/>
    </ligand>
</feature>
<feature type="mutagenesis site" description="Abolishes the binding of catalytically essential Mg(2+) ions and inactivates cyclase activity." evidence="4 8">
    <original>D</original>
    <variation>A</variation>
    <location>
        <position position="92"/>
    </location>
</feature>
<feature type="mutagenesis site" description="Abolishes prenyl transferase activity." evidence="4 8">
    <original>D</original>
    <variation>A</variation>
    <location>
        <position position="474"/>
    </location>
</feature>
<feature type="strand" evidence="19">
    <location>
        <begin position="5"/>
        <end position="8"/>
    </location>
</feature>
<feature type="helix" evidence="18">
    <location>
        <begin position="11"/>
        <end position="13"/>
    </location>
</feature>
<feature type="turn" evidence="18">
    <location>
        <begin position="17"/>
        <end position="22"/>
    </location>
</feature>
<feature type="strand" evidence="19">
    <location>
        <begin position="26"/>
        <end position="28"/>
    </location>
</feature>
<feature type="helix" evidence="19">
    <location>
        <begin position="31"/>
        <end position="48"/>
    </location>
</feature>
<feature type="helix" evidence="19">
    <location>
        <begin position="65"/>
        <end position="69"/>
    </location>
</feature>
<feature type="helix" evidence="19">
    <location>
        <begin position="75"/>
        <end position="77"/>
    </location>
</feature>
<feature type="helix" evidence="19">
    <location>
        <begin position="78"/>
        <end position="95"/>
    </location>
</feature>
<feature type="turn" evidence="18">
    <location>
        <begin position="138"/>
        <end position="140"/>
    </location>
</feature>
<feature type="helix" evidence="19">
    <location>
        <begin position="141"/>
        <end position="148"/>
    </location>
</feature>
<feature type="helix" evidence="19">
    <location>
        <begin position="152"/>
        <end position="161"/>
    </location>
</feature>
<feature type="helix" evidence="19">
    <location>
        <begin position="163"/>
        <end position="167"/>
    </location>
</feature>
<feature type="helix" evidence="19">
    <location>
        <begin position="181"/>
        <end position="191"/>
    </location>
</feature>
<feature type="helix" evidence="19">
    <location>
        <begin position="194"/>
        <end position="205"/>
    </location>
</feature>
<feature type="helix" evidence="19">
    <location>
        <begin position="214"/>
        <end position="217"/>
    </location>
</feature>
<feature type="turn" evidence="19">
    <location>
        <begin position="218"/>
        <end position="220"/>
    </location>
</feature>
<feature type="helix" evidence="19">
    <location>
        <begin position="222"/>
        <end position="235"/>
    </location>
</feature>
<feature type="helix" evidence="19">
    <location>
        <begin position="237"/>
        <end position="247"/>
    </location>
</feature>
<feature type="helix" evidence="19">
    <location>
        <begin position="255"/>
        <end position="262"/>
    </location>
</feature>
<feature type="helix" evidence="19">
    <location>
        <begin position="267"/>
        <end position="291"/>
    </location>
</feature>
<feature type="strand" evidence="19">
    <location>
        <begin position="292"/>
        <end position="294"/>
    </location>
</feature>
<feature type="strand" evidence="19">
    <location>
        <begin position="296"/>
        <end position="298"/>
    </location>
</feature>
<feature type="helix" evidence="19">
    <location>
        <begin position="300"/>
        <end position="308"/>
    </location>
</feature>
<feature type="helix" evidence="19">
    <location>
        <begin position="310"/>
        <end position="320"/>
    </location>
</feature>
<feature type="turn" evidence="19">
    <location>
        <begin position="324"/>
        <end position="326"/>
    </location>
</feature>
<feature type="helix" evidence="19">
    <location>
        <begin position="334"/>
        <end position="341"/>
    </location>
</feature>
<feature type="helix" evidence="20">
    <location>
        <begin position="415"/>
        <end position="422"/>
    </location>
</feature>
<feature type="helix" evidence="20">
    <location>
        <begin position="424"/>
        <end position="429"/>
    </location>
</feature>
<feature type="helix" evidence="20">
    <location>
        <begin position="437"/>
        <end position="449"/>
    </location>
</feature>
<feature type="helix" evidence="20">
    <location>
        <begin position="453"/>
        <end position="474"/>
    </location>
</feature>
<feature type="strand" evidence="20">
    <location>
        <begin position="475"/>
        <end position="477"/>
    </location>
</feature>
<feature type="strand" evidence="20">
    <location>
        <begin position="482"/>
        <end position="485"/>
    </location>
</feature>
<feature type="helix" evidence="20">
    <location>
        <begin position="490"/>
        <end position="513"/>
    </location>
</feature>
<feature type="helix" evidence="20">
    <location>
        <begin position="522"/>
        <end position="544"/>
    </location>
</feature>
<feature type="helix" evidence="20">
    <location>
        <begin position="551"/>
        <end position="559"/>
    </location>
</feature>
<feature type="helix" evidence="20">
    <location>
        <begin position="562"/>
        <end position="575"/>
    </location>
</feature>
<feature type="strand" evidence="21">
    <location>
        <begin position="579"/>
        <end position="581"/>
    </location>
</feature>
<feature type="helix" evidence="20">
    <location>
        <begin position="583"/>
        <end position="607"/>
    </location>
</feature>
<feature type="helix" evidence="21">
    <location>
        <begin position="613"/>
        <end position="619"/>
    </location>
</feature>
<feature type="helix" evidence="21">
    <location>
        <begin position="623"/>
        <end position="627"/>
    </location>
</feature>
<feature type="helix" evidence="20">
    <location>
        <begin position="632"/>
        <end position="640"/>
    </location>
</feature>
<feature type="helix" evidence="20">
    <location>
        <begin position="645"/>
        <end position="656"/>
    </location>
</feature>
<feature type="helix" evidence="20">
    <location>
        <begin position="662"/>
        <end position="674"/>
    </location>
</feature>
<feature type="helix" evidence="20">
    <location>
        <begin position="678"/>
        <end position="702"/>
    </location>
</feature>
<feature type="strand" evidence="21">
    <location>
        <begin position="703"/>
        <end position="705"/>
    </location>
</feature>
<feature type="helix" evidence="20">
    <location>
        <begin position="708"/>
        <end position="715"/>
    </location>
</feature>